<sequence>MYKLVLIRHGESVWNQENRFTGWQDVDLSEKGRAEALKGGKALREKGFSFDVAYTSVLKRAIKTLNFVLDEVDQVWLPVHKDWRLNERHYGALQGLNKAETAARHGEEQVKIWRRSYDTPPPPMEVSDPRHPSHDPRYKNVDAQLLPSNESLKDTVARFLPLWDGTIAPAVKSGKNVLIVAHGNSLRALMQHLEGMTPDEIMGVNMPTGIPMMYELDANLKVLKKEFIGDPDEVKAAIEAVANQGKAK</sequence>
<keyword id="KW-0312">Gluconeogenesis</keyword>
<keyword id="KW-0324">Glycolysis</keyword>
<keyword id="KW-0413">Isomerase</keyword>
<keyword id="KW-1185">Reference proteome</keyword>
<reference key="1">
    <citation type="journal article" date="2004" name="Science">
        <title>A predator unmasked: life cycle of Bdellovibrio bacteriovorus from a genomic perspective.</title>
        <authorList>
            <person name="Rendulic S."/>
            <person name="Jagtap P."/>
            <person name="Rosinus A."/>
            <person name="Eppinger M."/>
            <person name="Baar C."/>
            <person name="Lanz C."/>
            <person name="Keller H."/>
            <person name="Lambert C."/>
            <person name="Evans K.J."/>
            <person name="Goesmann A."/>
            <person name="Meyer F."/>
            <person name="Sockett R.E."/>
            <person name="Schuster S.C."/>
        </authorList>
    </citation>
    <scope>NUCLEOTIDE SEQUENCE [LARGE SCALE GENOMIC DNA]</scope>
    <source>
        <strain>ATCC 15356 / DSM 50701 / NCIMB 9529 / HD100</strain>
    </source>
</reference>
<feature type="chain" id="PRO_0000179849" description="2,3-bisphosphoglycerate-dependent phosphoglycerate mutase">
    <location>
        <begin position="1"/>
        <end position="248"/>
    </location>
</feature>
<feature type="region of interest" description="Disordered" evidence="2">
    <location>
        <begin position="116"/>
        <end position="135"/>
    </location>
</feature>
<feature type="active site" description="Tele-phosphohistidine intermediate" evidence="1">
    <location>
        <position position="9"/>
    </location>
</feature>
<feature type="active site" description="Proton donor/acceptor" evidence="1">
    <location>
        <position position="87"/>
    </location>
</feature>
<feature type="binding site" evidence="1">
    <location>
        <begin position="8"/>
        <end position="15"/>
    </location>
    <ligand>
        <name>substrate</name>
    </ligand>
</feature>
<feature type="binding site" evidence="1">
    <location>
        <begin position="21"/>
        <end position="22"/>
    </location>
    <ligand>
        <name>substrate</name>
    </ligand>
</feature>
<feature type="binding site" evidence="1">
    <location>
        <position position="60"/>
    </location>
    <ligand>
        <name>substrate</name>
    </ligand>
</feature>
<feature type="binding site" evidence="1">
    <location>
        <begin position="87"/>
        <end position="90"/>
    </location>
    <ligand>
        <name>substrate</name>
    </ligand>
</feature>
<feature type="binding site" evidence="1">
    <location>
        <position position="98"/>
    </location>
    <ligand>
        <name>substrate</name>
    </ligand>
</feature>
<feature type="binding site" evidence="1">
    <location>
        <begin position="114"/>
        <end position="115"/>
    </location>
    <ligand>
        <name>substrate</name>
    </ligand>
</feature>
<feature type="binding site" evidence="1">
    <location>
        <begin position="183"/>
        <end position="184"/>
    </location>
    <ligand>
        <name>substrate</name>
    </ligand>
</feature>
<feature type="site" description="Transition state stabilizer" evidence="1">
    <location>
        <position position="182"/>
    </location>
</feature>
<gene>
    <name evidence="1" type="primary">gpmA</name>
    <name type="ordered locus">Bd2727</name>
</gene>
<evidence type="ECO:0000255" key="1">
    <source>
        <dbReference type="HAMAP-Rule" id="MF_01039"/>
    </source>
</evidence>
<evidence type="ECO:0000256" key="2">
    <source>
        <dbReference type="SAM" id="MobiDB-lite"/>
    </source>
</evidence>
<protein>
    <recommendedName>
        <fullName evidence="1">2,3-bisphosphoglycerate-dependent phosphoglycerate mutase</fullName>
        <shortName evidence="1">BPG-dependent PGAM</shortName>
        <shortName evidence="1">PGAM</shortName>
        <shortName evidence="1">Phosphoglyceromutase</shortName>
        <shortName evidence="1">dPGM</shortName>
        <ecNumber evidence="1">5.4.2.11</ecNumber>
    </recommendedName>
</protein>
<accession>Q6MJP3</accession>
<proteinExistence type="inferred from homology"/>
<dbReference type="EC" id="5.4.2.11" evidence="1"/>
<dbReference type="EMBL" id="BX842653">
    <property type="protein sequence ID" value="CAE80517.1"/>
    <property type="molecule type" value="Genomic_DNA"/>
</dbReference>
<dbReference type="RefSeq" id="WP_011165120.1">
    <property type="nucleotide sequence ID" value="NC_005363.1"/>
</dbReference>
<dbReference type="SMR" id="Q6MJP3"/>
<dbReference type="STRING" id="264462.Bd2727"/>
<dbReference type="GeneID" id="93013615"/>
<dbReference type="KEGG" id="bba:Bd2727"/>
<dbReference type="eggNOG" id="COG0588">
    <property type="taxonomic scope" value="Bacteria"/>
</dbReference>
<dbReference type="HOGENOM" id="CLU_033323_1_1_7"/>
<dbReference type="UniPathway" id="UPA00109">
    <property type="reaction ID" value="UER00186"/>
</dbReference>
<dbReference type="Proteomes" id="UP000008080">
    <property type="component" value="Chromosome"/>
</dbReference>
<dbReference type="GO" id="GO:0004619">
    <property type="term" value="F:phosphoglycerate mutase activity"/>
    <property type="evidence" value="ECO:0007669"/>
    <property type="project" value="UniProtKB-EC"/>
</dbReference>
<dbReference type="GO" id="GO:0006094">
    <property type="term" value="P:gluconeogenesis"/>
    <property type="evidence" value="ECO:0007669"/>
    <property type="project" value="UniProtKB-UniRule"/>
</dbReference>
<dbReference type="GO" id="GO:0006096">
    <property type="term" value="P:glycolytic process"/>
    <property type="evidence" value="ECO:0007669"/>
    <property type="project" value="UniProtKB-UniRule"/>
</dbReference>
<dbReference type="CDD" id="cd07067">
    <property type="entry name" value="HP_PGM_like"/>
    <property type="match status" value="1"/>
</dbReference>
<dbReference type="FunFam" id="3.40.50.1240:FF:000003">
    <property type="entry name" value="2,3-bisphosphoglycerate-dependent phosphoglycerate mutase"/>
    <property type="match status" value="1"/>
</dbReference>
<dbReference type="Gene3D" id="3.40.50.1240">
    <property type="entry name" value="Phosphoglycerate mutase-like"/>
    <property type="match status" value="1"/>
</dbReference>
<dbReference type="HAMAP" id="MF_01039">
    <property type="entry name" value="PGAM_GpmA"/>
    <property type="match status" value="1"/>
</dbReference>
<dbReference type="InterPro" id="IPR013078">
    <property type="entry name" value="His_Pase_superF_clade-1"/>
</dbReference>
<dbReference type="InterPro" id="IPR029033">
    <property type="entry name" value="His_PPase_superfam"/>
</dbReference>
<dbReference type="InterPro" id="IPR001345">
    <property type="entry name" value="PG/BPGM_mutase_AS"/>
</dbReference>
<dbReference type="InterPro" id="IPR005952">
    <property type="entry name" value="Phosphogly_mut1"/>
</dbReference>
<dbReference type="NCBIfam" id="TIGR01258">
    <property type="entry name" value="pgm_1"/>
    <property type="match status" value="1"/>
</dbReference>
<dbReference type="NCBIfam" id="NF010713">
    <property type="entry name" value="PRK14115.1"/>
    <property type="match status" value="1"/>
</dbReference>
<dbReference type="PANTHER" id="PTHR11931">
    <property type="entry name" value="PHOSPHOGLYCERATE MUTASE"/>
    <property type="match status" value="1"/>
</dbReference>
<dbReference type="Pfam" id="PF00300">
    <property type="entry name" value="His_Phos_1"/>
    <property type="match status" value="2"/>
</dbReference>
<dbReference type="PIRSF" id="PIRSF000709">
    <property type="entry name" value="6PFK_2-Ptase"/>
    <property type="match status" value="1"/>
</dbReference>
<dbReference type="SMART" id="SM00855">
    <property type="entry name" value="PGAM"/>
    <property type="match status" value="1"/>
</dbReference>
<dbReference type="SUPFAM" id="SSF53254">
    <property type="entry name" value="Phosphoglycerate mutase-like"/>
    <property type="match status" value="1"/>
</dbReference>
<dbReference type="PROSITE" id="PS00175">
    <property type="entry name" value="PG_MUTASE"/>
    <property type="match status" value="1"/>
</dbReference>
<comment type="function">
    <text evidence="1">Catalyzes the interconversion of 2-phosphoglycerate and 3-phosphoglycerate.</text>
</comment>
<comment type="catalytic activity">
    <reaction evidence="1">
        <text>(2R)-2-phosphoglycerate = (2R)-3-phosphoglycerate</text>
        <dbReference type="Rhea" id="RHEA:15901"/>
        <dbReference type="ChEBI" id="CHEBI:58272"/>
        <dbReference type="ChEBI" id="CHEBI:58289"/>
        <dbReference type="EC" id="5.4.2.11"/>
    </reaction>
</comment>
<comment type="pathway">
    <text evidence="1">Carbohydrate degradation; glycolysis; pyruvate from D-glyceraldehyde 3-phosphate: step 3/5.</text>
</comment>
<comment type="subunit">
    <text evidence="1">Homodimer.</text>
</comment>
<comment type="similarity">
    <text evidence="1">Belongs to the phosphoglycerate mutase family. BPG-dependent PGAM subfamily.</text>
</comment>
<organism>
    <name type="scientific">Bdellovibrio bacteriovorus (strain ATCC 15356 / DSM 50701 / NCIMB 9529 / HD100)</name>
    <dbReference type="NCBI Taxonomy" id="264462"/>
    <lineage>
        <taxon>Bacteria</taxon>
        <taxon>Pseudomonadati</taxon>
        <taxon>Bdellovibrionota</taxon>
        <taxon>Bdellovibrionia</taxon>
        <taxon>Bdellovibrionales</taxon>
        <taxon>Pseudobdellovibrionaceae</taxon>
        <taxon>Bdellovibrio</taxon>
    </lineage>
</organism>
<name>GPMA_BDEBA</name>